<organism>
    <name type="scientific">Dictyostelium discoideum</name>
    <name type="common">Social amoeba</name>
    <dbReference type="NCBI Taxonomy" id="44689"/>
    <lineage>
        <taxon>Eukaryota</taxon>
        <taxon>Amoebozoa</taxon>
        <taxon>Evosea</taxon>
        <taxon>Eumycetozoa</taxon>
        <taxon>Dictyostelia</taxon>
        <taxon>Dictyosteliales</taxon>
        <taxon>Dictyosteliaceae</taxon>
        <taxon>Dictyostelium</taxon>
    </lineage>
</organism>
<sequence>MNNLITENQNLNIKDQICEIEIKNTIVFNKNNINNNNNNNSNSSIKKCLKSSFNESINENNILTFEIQPNGTYKNYFSNEIPNEIQHLIVEEELYKQFIVKINNKRLPIYYQIMLILMILSMILIIPLFFIVFTFSPRLAFGICLTLLFYIAIFILTNGLIEKRIVLILTYFVLYKKKNYKIEEIILNYNSFLINKKIPILFRLIYKENHVVPGFDKISIEVTFINE</sequence>
<reference key="1">
    <citation type="journal article" date="2005" name="Nature">
        <title>The genome of the social amoeba Dictyostelium discoideum.</title>
        <authorList>
            <person name="Eichinger L."/>
            <person name="Pachebat J.A."/>
            <person name="Gloeckner G."/>
            <person name="Rajandream M.A."/>
            <person name="Sucgang R."/>
            <person name="Berriman M."/>
            <person name="Song J."/>
            <person name="Olsen R."/>
            <person name="Szafranski K."/>
            <person name="Xu Q."/>
            <person name="Tunggal B."/>
            <person name="Kummerfeld S."/>
            <person name="Madera M."/>
            <person name="Konfortov B.A."/>
            <person name="Rivero F."/>
            <person name="Bankier A.T."/>
            <person name="Lehmann R."/>
            <person name="Hamlin N."/>
            <person name="Davies R."/>
            <person name="Gaudet P."/>
            <person name="Fey P."/>
            <person name="Pilcher K."/>
            <person name="Chen G."/>
            <person name="Saunders D."/>
            <person name="Sodergren E.J."/>
            <person name="Davis P."/>
            <person name="Kerhornou A."/>
            <person name="Nie X."/>
            <person name="Hall N."/>
            <person name="Anjard C."/>
            <person name="Hemphill L."/>
            <person name="Bason N."/>
            <person name="Farbrother P."/>
            <person name="Desany B."/>
            <person name="Just E."/>
            <person name="Morio T."/>
            <person name="Rost R."/>
            <person name="Churcher C.M."/>
            <person name="Cooper J."/>
            <person name="Haydock S."/>
            <person name="van Driessche N."/>
            <person name="Cronin A."/>
            <person name="Goodhead I."/>
            <person name="Muzny D.M."/>
            <person name="Mourier T."/>
            <person name="Pain A."/>
            <person name="Lu M."/>
            <person name="Harper D."/>
            <person name="Lindsay R."/>
            <person name="Hauser H."/>
            <person name="James K.D."/>
            <person name="Quiles M."/>
            <person name="Madan Babu M."/>
            <person name="Saito T."/>
            <person name="Buchrieser C."/>
            <person name="Wardroper A."/>
            <person name="Felder M."/>
            <person name="Thangavelu M."/>
            <person name="Johnson D."/>
            <person name="Knights A."/>
            <person name="Loulseged H."/>
            <person name="Mungall K.L."/>
            <person name="Oliver K."/>
            <person name="Price C."/>
            <person name="Quail M.A."/>
            <person name="Urushihara H."/>
            <person name="Hernandez J."/>
            <person name="Rabbinowitsch E."/>
            <person name="Steffen D."/>
            <person name="Sanders M."/>
            <person name="Ma J."/>
            <person name="Kohara Y."/>
            <person name="Sharp S."/>
            <person name="Simmonds M.N."/>
            <person name="Spiegler S."/>
            <person name="Tivey A."/>
            <person name="Sugano S."/>
            <person name="White B."/>
            <person name="Walker D."/>
            <person name="Woodward J.R."/>
            <person name="Winckler T."/>
            <person name="Tanaka Y."/>
            <person name="Shaulsky G."/>
            <person name="Schleicher M."/>
            <person name="Weinstock G.M."/>
            <person name="Rosenthal A."/>
            <person name="Cox E.C."/>
            <person name="Chisholm R.L."/>
            <person name="Gibbs R.A."/>
            <person name="Loomis W.F."/>
            <person name="Platzer M."/>
            <person name="Kay R.R."/>
            <person name="Williams J.G."/>
            <person name="Dear P.H."/>
            <person name="Noegel A.A."/>
            <person name="Barrell B.G."/>
            <person name="Kuspa A."/>
        </authorList>
    </citation>
    <scope>NUCLEOTIDE SEQUENCE [LARGE SCALE GENOMIC DNA]</scope>
    <source>
        <strain>AX4</strain>
    </source>
</reference>
<proteinExistence type="predicted"/>
<evidence type="ECO:0000255" key="1"/>
<evidence type="ECO:0000305" key="2"/>
<keyword id="KW-0472">Membrane</keyword>
<keyword id="KW-1185">Reference proteome</keyword>
<keyword id="KW-0812">Transmembrane</keyword>
<keyword id="KW-1133">Transmembrane helix</keyword>
<accession>Q54NH7</accession>
<comment type="subcellular location">
    <subcellularLocation>
        <location evidence="2">Membrane</location>
        <topology evidence="2">Multi-pass membrane protein</topology>
    </subcellularLocation>
</comment>
<name>Y5821_DICDI</name>
<protein>
    <recommendedName>
        <fullName>Putative uncharacterized transmembrane protein DDB_G0285229</fullName>
    </recommendedName>
</protein>
<gene>
    <name type="ORF">DDB_G0285229</name>
</gene>
<dbReference type="EMBL" id="AAFI02000076">
    <property type="protein sequence ID" value="EAL64826.1"/>
    <property type="molecule type" value="Genomic_DNA"/>
</dbReference>
<dbReference type="RefSeq" id="XP_638340.1">
    <property type="nucleotide sequence ID" value="XM_633248.1"/>
</dbReference>
<dbReference type="SMR" id="Q54NH7"/>
<dbReference type="FunCoup" id="Q54NH7">
    <property type="interactions" value="877"/>
</dbReference>
<dbReference type="PaxDb" id="44689-DDB0215821"/>
<dbReference type="EnsemblProtists" id="EAL64826">
    <property type="protein sequence ID" value="EAL64826"/>
    <property type="gene ID" value="DDB_G0285229"/>
</dbReference>
<dbReference type="GeneID" id="8625008"/>
<dbReference type="KEGG" id="ddi:DDB_G0285229"/>
<dbReference type="dictyBase" id="DDB_G0285229"/>
<dbReference type="VEuPathDB" id="AmoebaDB:DDB_G0285229"/>
<dbReference type="eggNOG" id="ENOG502RIPY">
    <property type="taxonomic scope" value="Eukaryota"/>
</dbReference>
<dbReference type="HOGENOM" id="CLU_1221592_0_0_1"/>
<dbReference type="InParanoid" id="Q54NH7"/>
<dbReference type="OMA" id="RLAFGIC"/>
<dbReference type="PRO" id="PR:Q54NH7"/>
<dbReference type="Proteomes" id="UP000002195">
    <property type="component" value="Chromosome 4"/>
</dbReference>
<dbReference type="GO" id="GO:0016020">
    <property type="term" value="C:membrane"/>
    <property type="evidence" value="ECO:0007669"/>
    <property type="project" value="UniProtKB-SubCell"/>
</dbReference>
<feature type="chain" id="PRO_0000350782" description="Putative uncharacterized transmembrane protein DDB_G0285229">
    <location>
        <begin position="1"/>
        <end position="227"/>
    </location>
</feature>
<feature type="transmembrane region" description="Helical" evidence="1">
    <location>
        <begin position="113"/>
        <end position="133"/>
    </location>
</feature>
<feature type="transmembrane region" description="Helical" evidence="1">
    <location>
        <begin position="141"/>
        <end position="161"/>
    </location>
</feature>